<proteinExistence type="inferred from homology"/>
<organism>
    <name type="scientific">Aspergillus fumigatus (strain CBS 144.89 / FGSC A1163 / CEA10)</name>
    <name type="common">Neosartorya fumigata</name>
    <dbReference type="NCBI Taxonomy" id="451804"/>
    <lineage>
        <taxon>Eukaryota</taxon>
        <taxon>Fungi</taxon>
        <taxon>Dikarya</taxon>
        <taxon>Ascomycota</taxon>
        <taxon>Pezizomycotina</taxon>
        <taxon>Eurotiomycetes</taxon>
        <taxon>Eurotiomycetidae</taxon>
        <taxon>Eurotiales</taxon>
        <taxon>Aspergillaceae</taxon>
        <taxon>Aspergillus</taxon>
        <taxon>Aspergillus subgen. Fumigati</taxon>
    </lineage>
</organism>
<keyword id="KW-0227">DNA damage</keyword>
<keyword id="KW-0234">DNA repair</keyword>
<keyword id="KW-0235">DNA replication</keyword>
<keyword id="KW-0255">Endonuclease</keyword>
<keyword id="KW-0269">Exonuclease</keyword>
<keyword id="KW-0378">Hydrolase</keyword>
<keyword id="KW-0460">Magnesium</keyword>
<keyword id="KW-0479">Metal-binding</keyword>
<keyword id="KW-0496">Mitochondrion</keyword>
<keyword id="KW-0540">Nuclease</keyword>
<keyword id="KW-0539">Nucleus</keyword>
<keyword id="KW-0597">Phosphoprotein</keyword>
<accession>B0XZ33</accession>
<evidence type="ECO:0000255" key="1">
    <source>
        <dbReference type="HAMAP-Rule" id="MF_03140"/>
    </source>
</evidence>
<evidence type="ECO:0000256" key="2">
    <source>
        <dbReference type="SAM" id="MobiDB-lite"/>
    </source>
</evidence>
<evidence type="ECO:0000305" key="3"/>
<dbReference type="EC" id="3.1.-.-" evidence="1"/>
<dbReference type="EMBL" id="DS499596">
    <property type="protein sequence ID" value="EDP53129.1"/>
    <property type="status" value="ALT_SEQ"/>
    <property type="molecule type" value="Genomic_DNA"/>
</dbReference>
<dbReference type="SMR" id="B0XZ33"/>
<dbReference type="OrthoDB" id="89148at5052"/>
<dbReference type="PhylomeDB" id="B0XZ33"/>
<dbReference type="Proteomes" id="UP000001699">
    <property type="component" value="Unassembled WGS sequence"/>
</dbReference>
<dbReference type="GO" id="GO:0005739">
    <property type="term" value="C:mitochondrion"/>
    <property type="evidence" value="ECO:0007669"/>
    <property type="project" value="UniProtKB-SubCell"/>
</dbReference>
<dbReference type="GO" id="GO:0005730">
    <property type="term" value="C:nucleolus"/>
    <property type="evidence" value="ECO:0007669"/>
    <property type="project" value="UniProtKB-SubCell"/>
</dbReference>
<dbReference type="GO" id="GO:0005654">
    <property type="term" value="C:nucleoplasm"/>
    <property type="evidence" value="ECO:0007669"/>
    <property type="project" value="UniProtKB-SubCell"/>
</dbReference>
<dbReference type="GO" id="GO:0008409">
    <property type="term" value="F:5'-3' exonuclease activity"/>
    <property type="evidence" value="ECO:0007669"/>
    <property type="project" value="UniProtKB-UniRule"/>
</dbReference>
<dbReference type="GO" id="GO:0017108">
    <property type="term" value="F:5'-flap endonuclease activity"/>
    <property type="evidence" value="ECO:0007669"/>
    <property type="project" value="UniProtKB-UniRule"/>
</dbReference>
<dbReference type="GO" id="GO:0003677">
    <property type="term" value="F:DNA binding"/>
    <property type="evidence" value="ECO:0007669"/>
    <property type="project" value="UniProtKB-UniRule"/>
</dbReference>
<dbReference type="GO" id="GO:0000287">
    <property type="term" value="F:magnesium ion binding"/>
    <property type="evidence" value="ECO:0007669"/>
    <property type="project" value="UniProtKB-UniRule"/>
</dbReference>
<dbReference type="GO" id="GO:0006284">
    <property type="term" value="P:base-excision repair"/>
    <property type="evidence" value="ECO:0007669"/>
    <property type="project" value="UniProtKB-UniRule"/>
</dbReference>
<dbReference type="GO" id="GO:0043137">
    <property type="term" value="P:DNA replication, removal of RNA primer"/>
    <property type="evidence" value="ECO:0007669"/>
    <property type="project" value="UniProtKB-UniRule"/>
</dbReference>
<dbReference type="CDD" id="cd09907">
    <property type="entry name" value="H3TH_FEN1-Euk"/>
    <property type="match status" value="1"/>
</dbReference>
<dbReference type="CDD" id="cd09867">
    <property type="entry name" value="PIN_FEN1"/>
    <property type="match status" value="1"/>
</dbReference>
<dbReference type="FunFam" id="1.10.150.20:FF:000009">
    <property type="entry name" value="Flap endonuclease 1"/>
    <property type="match status" value="1"/>
</dbReference>
<dbReference type="FunFam" id="3.40.50.1010:FF:000003">
    <property type="entry name" value="Flap endonuclease 1"/>
    <property type="match status" value="1"/>
</dbReference>
<dbReference type="Gene3D" id="1.10.150.20">
    <property type="entry name" value="5' to 3' exonuclease, C-terminal subdomain"/>
    <property type="match status" value="1"/>
</dbReference>
<dbReference type="Gene3D" id="3.40.50.1010">
    <property type="entry name" value="5'-nuclease"/>
    <property type="match status" value="1"/>
</dbReference>
<dbReference type="HAMAP" id="MF_00614">
    <property type="entry name" value="Fen"/>
    <property type="match status" value="1"/>
</dbReference>
<dbReference type="InterPro" id="IPR036279">
    <property type="entry name" value="5-3_exonuclease_C_sf"/>
</dbReference>
<dbReference type="InterPro" id="IPR023426">
    <property type="entry name" value="Flap_endonuc"/>
</dbReference>
<dbReference type="InterPro" id="IPR008918">
    <property type="entry name" value="HhH2"/>
</dbReference>
<dbReference type="InterPro" id="IPR029060">
    <property type="entry name" value="PIN-like_dom_sf"/>
</dbReference>
<dbReference type="InterPro" id="IPR006086">
    <property type="entry name" value="XPG-I_dom"/>
</dbReference>
<dbReference type="InterPro" id="IPR006084">
    <property type="entry name" value="XPG/Rad2"/>
</dbReference>
<dbReference type="InterPro" id="IPR019974">
    <property type="entry name" value="XPG_CS"/>
</dbReference>
<dbReference type="InterPro" id="IPR006085">
    <property type="entry name" value="XPG_DNA_repair_N"/>
</dbReference>
<dbReference type="PANTHER" id="PTHR11081:SF9">
    <property type="entry name" value="FLAP ENDONUCLEASE 1"/>
    <property type="match status" value="1"/>
</dbReference>
<dbReference type="PANTHER" id="PTHR11081">
    <property type="entry name" value="FLAP ENDONUCLEASE FAMILY MEMBER"/>
    <property type="match status" value="1"/>
</dbReference>
<dbReference type="Pfam" id="PF00867">
    <property type="entry name" value="XPG_I"/>
    <property type="match status" value="1"/>
</dbReference>
<dbReference type="Pfam" id="PF00752">
    <property type="entry name" value="XPG_N"/>
    <property type="match status" value="1"/>
</dbReference>
<dbReference type="PRINTS" id="PR00853">
    <property type="entry name" value="XPGRADSUPER"/>
</dbReference>
<dbReference type="SMART" id="SM00279">
    <property type="entry name" value="HhH2"/>
    <property type="match status" value="1"/>
</dbReference>
<dbReference type="SMART" id="SM00484">
    <property type="entry name" value="XPGI"/>
    <property type="match status" value="1"/>
</dbReference>
<dbReference type="SMART" id="SM00485">
    <property type="entry name" value="XPGN"/>
    <property type="match status" value="1"/>
</dbReference>
<dbReference type="SUPFAM" id="SSF47807">
    <property type="entry name" value="5' to 3' exonuclease, C-terminal subdomain"/>
    <property type="match status" value="1"/>
</dbReference>
<dbReference type="SUPFAM" id="SSF88723">
    <property type="entry name" value="PIN domain-like"/>
    <property type="match status" value="1"/>
</dbReference>
<dbReference type="PROSITE" id="PS00841">
    <property type="entry name" value="XPG_1"/>
    <property type="match status" value="1"/>
</dbReference>
<dbReference type="PROSITE" id="PS00842">
    <property type="entry name" value="XPG_2"/>
    <property type="match status" value="1"/>
</dbReference>
<feature type="chain" id="PRO_0000403563" description="Flap endonuclease 1">
    <location>
        <begin position="1"/>
        <end position="395"/>
    </location>
</feature>
<feature type="region of interest" description="N-domain">
    <location>
        <begin position="1"/>
        <end position="104"/>
    </location>
</feature>
<feature type="region of interest" description="Disordered" evidence="2">
    <location>
        <begin position="102"/>
        <end position="121"/>
    </location>
</feature>
<feature type="region of interest" description="I-domain">
    <location>
        <begin position="122"/>
        <end position="253"/>
    </location>
</feature>
<feature type="region of interest" description="Interaction with PCNA" evidence="1">
    <location>
        <begin position="341"/>
        <end position="349"/>
    </location>
</feature>
<feature type="region of interest" description="Disordered" evidence="2">
    <location>
        <begin position="348"/>
        <end position="395"/>
    </location>
</feature>
<feature type="compositionally biased region" description="Basic and acidic residues" evidence="2">
    <location>
        <begin position="353"/>
        <end position="389"/>
    </location>
</feature>
<feature type="binding site" evidence="1">
    <location>
        <position position="34"/>
    </location>
    <ligand>
        <name>Mg(2+)</name>
        <dbReference type="ChEBI" id="CHEBI:18420"/>
        <label>1</label>
    </ligand>
</feature>
<feature type="binding site" evidence="1">
    <location>
        <position position="47"/>
    </location>
    <ligand>
        <name>DNA</name>
        <dbReference type="ChEBI" id="CHEBI:16991"/>
    </ligand>
</feature>
<feature type="binding site" evidence="1">
    <location>
        <position position="70"/>
    </location>
    <ligand>
        <name>DNA</name>
        <dbReference type="ChEBI" id="CHEBI:16991"/>
    </ligand>
</feature>
<feature type="binding site" evidence="1">
    <location>
        <position position="86"/>
    </location>
    <ligand>
        <name>Mg(2+)</name>
        <dbReference type="ChEBI" id="CHEBI:18420"/>
        <label>1</label>
    </ligand>
</feature>
<feature type="binding site" evidence="1">
    <location>
        <position position="158"/>
    </location>
    <ligand>
        <name>DNA</name>
        <dbReference type="ChEBI" id="CHEBI:16991"/>
    </ligand>
</feature>
<feature type="binding site" evidence="1">
    <location>
        <position position="158"/>
    </location>
    <ligand>
        <name>Mg(2+)</name>
        <dbReference type="ChEBI" id="CHEBI:18420"/>
        <label>1</label>
    </ligand>
</feature>
<feature type="binding site" evidence="1">
    <location>
        <position position="160"/>
    </location>
    <ligand>
        <name>Mg(2+)</name>
        <dbReference type="ChEBI" id="CHEBI:18420"/>
        <label>1</label>
    </ligand>
</feature>
<feature type="binding site" evidence="1">
    <location>
        <position position="179"/>
    </location>
    <ligand>
        <name>Mg(2+)</name>
        <dbReference type="ChEBI" id="CHEBI:18420"/>
        <label>2</label>
    </ligand>
</feature>
<feature type="binding site" evidence="1">
    <location>
        <position position="181"/>
    </location>
    <ligand>
        <name>Mg(2+)</name>
        <dbReference type="ChEBI" id="CHEBI:18420"/>
        <label>2</label>
    </ligand>
</feature>
<feature type="binding site" evidence="1">
    <location>
        <position position="231"/>
    </location>
    <ligand>
        <name>DNA</name>
        <dbReference type="ChEBI" id="CHEBI:16991"/>
    </ligand>
</feature>
<feature type="binding site" evidence="1">
    <location>
        <position position="233"/>
    </location>
    <ligand>
        <name>DNA</name>
        <dbReference type="ChEBI" id="CHEBI:16991"/>
    </ligand>
</feature>
<feature type="binding site" evidence="1">
    <location>
        <position position="233"/>
    </location>
    <ligand>
        <name>Mg(2+)</name>
        <dbReference type="ChEBI" id="CHEBI:18420"/>
        <label>2</label>
    </ligand>
</feature>
<reference key="1">
    <citation type="journal article" date="2008" name="PLoS Genet.">
        <title>Genomic islands in the pathogenic filamentous fungus Aspergillus fumigatus.</title>
        <authorList>
            <person name="Fedorova N.D."/>
            <person name="Khaldi N."/>
            <person name="Joardar V.S."/>
            <person name="Maiti R."/>
            <person name="Amedeo P."/>
            <person name="Anderson M.J."/>
            <person name="Crabtree J."/>
            <person name="Silva J.C."/>
            <person name="Badger J.H."/>
            <person name="Albarraq A."/>
            <person name="Angiuoli S."/>
            <person name="Bussey H."/>
            <person name="Bowyer P."/>
            <person name="Cotty P.J."/>
            <person name="Dyer P.S."/>
            <person name="Egan A."/>
            <person name="Galens K."/>
            <person name="Fraser-Liggett C.M."/>
            <person name="Haas B.J."/>
            <person name="Inman J.M."/>
            <person name="Kent R."/>
            <person name="Lemieux S."/>
            <person name="Malavazi I."/>
            <person name="Orvis J."/>
            <person name="Roemer T."/>
            <person name="Ronning C.M."/>
            <person name="Sundaram J.P."/>
            <person name="Sutton G."/>
            <person name="Turner G."/>
            <person name="Venter J.C."/>
            <person name="White O.R."/>
            <person name="Whitty B.R."/>
            <person name="Youngman P."/>
            <person name="Wolfe K.H."/>
            <person name="Goldman G.H."/>
            <person name="Wortman J.R."/>
            <person name="Jiang B."/>
            <person name="Denning D.W."/>
            <person name="Nierman W.C."/>
        </authorList>
    </citation>
    <scope>NUCLEOTIDE SEQUENCE [LARGE SCALE GENOMIC DNA]</scope>
    <source>
        <strain>CBS 144.89 / FGSC A1163 / CEA10</strain>
    </source>
</reference>
<comment type="function">
    <text evidence="1">Structure-specific nuclease with 5'-flap endonuclease and 5'-3' exonuclease activities involved in DNA replication and repair. During DNA replication, cleaves the 5'-overhanging flap structure that is generated by displacement synthesis when DNA polymerase encounters the 5'-end of a downstream Okazaki fragment. It enters the flap from the 5'-end and then tracks to cleave the flap base, leaving a nick for ligation. Also involved in the long patch base excision repair (LP-BER) pathway, by cleaving within the apurinic/apyrimidinic (AP) site-terminated flap. Acts as a genome stabilization factor that prevents flaps from equilibrating into structures that lead to duplications and deletions. Also possesses 5'-3' exonuclease activity on nicked or gapped double-stranded DNA, and exhibits RNase H activity. Also involved in replication and repair of rDNA and in repairing mitochondrial DNA.</text>
</comment>
<comment type="cofactor">
    <cofactor evidence="1">
        <name>Mg(2+)</name>
        <dbReference type="ChEBI" id="CHEBI:18420"/>
    </cofactor>
    <text evidence="1">Binds 2 magnesium ions per subunit. They probably participate in the reaction catalyzed by the enzyme. May bind an additional third magnesium ion after substrate binding.</text>
</comment>
<comment type="subunit">
    <text evidence="1">Interacts with PCNA. Three molecules of fen1 bind to one PCNA trimer with each molecule binding to one PCNA monomer. PCNA stimulates the nuclease activity without altering cleavage specificity.</text>
</comment>
<comment type="subcellular location">
    <subcellularLocation>
        <location evidence="1">Nucleus</location>
        <location evidence="1">Nucleolus</location>
    </subcellularLocation>
    <subcellularLocation>
        <location evidence="1">Nucleus</location>
        <location evidence="1">Nucleoplasm</location>
    </subcellularLocation>
    <subcellularLocation>
        <location evidence="1">Mitochondrion</location>
    </subcellularLocation>
    <text evidence="1">Resides mostly in the nucleoli and relocalizes to the nucleoplasm upon DNA damage.</text>
</comment>
<comment type="PTM">
    <text evidence="1">Phosphorylated. Phosphorylation upon DNA damage induces relocalization to the nuclear plasma.</text>
</comment>
<comment type="similarity">
    <text evidence="1">Belongs to the XPG/RAD2 endonuclease family. FEN1 subfamily.</text>
</comment>
<comment type="sequence caution" evidence="3">
    <conflict type="erroneous gene model prediction">
        <sequence resource="EMBL-CDS" id="EDP53129"/>
    </conflict>
</comment>
<sequence length="395" mass="44766">MGIKHLFQVIQENAPDAIKAGDIKNHFGRKVAIDASMSIYSFLIAVRSEGQQLMSESGETTSHLMGMFYRTLRMVDNGIKPLYVFDGAPPKLKSGELAKRTARKAEATEAHEEAKETGTAEDVEKFSRRTVRVTREHNAECKKLLKLMGIPYIDAPTEAEAQCAVLARAGKVYAAASEDMDTLCFEAPILLRHLTFSEQRKEPIQEIHLNRALEGLGMDRKQFIDLCILLGCDYLEPIPKVGPNTALKLIREHGSLEKVVEAIENDPKKKYVIPEYWPYQDARELFLHPDVREADHPECDFKWEAPDVEALVEFLVKDKGFNEDRVRNGAARLQKNLKTAQQSRLEGFFKPVARTDEEKASLKRKHDEKLQEQKKRKKEEAKAKKEAKAKPRGAA</sequence>
<name>FEN1_ASPFC</name>
<protein>
    <recommendedName>
        <fullName evidence="1">Flap endonuclease 1</fullName>
        <shortName evidence="1">FEN-1</shortName>
        <ecNumber evidence="1">3.1.-.-</ecNumber>
    </recommendedName>
    <alternativeName>
        <fullName evidence="1">Flap structure-specific endonuclease 1</fullName>
    </alternativeName>
</protein>
<gene>
    <name type="primary">fen1</name>
    <name type="ORF">AFUB_042990</name>
</gene>